<keyword id="KW-1185">Reference proteome</keyword>
<keyword id="KW-0687">Ribonucleoprotein</keyword>
<keyword id="KW-0689">Ribosomal protein</keyword>
<keyword id="KW-0694">RNA-binding</keyword>
<keyword id="KW-0699">rRNA-binding</keyword>
<evidence type="ECO:0000255" key="1">
    <source>
        <dbReference type="HAMAP-Rule" id="MF_01320"/>
    </source>
</evidence>
<evidence type="ECO:0000256" key="2">
    <source>
        <dbReference type="SAM" id="MobiDB-lite"/>
    </source>
</evidence>
<evidence type="ECO:0000305" key="3"/>
<feature type="chain" id="PRO_1000086321" description="Large ribosomal subunit protein uL2">
    <location>
        <begin position="1"/>
        <end position="255"/>
    </location>
</feature>
<feature type="region of interest" description="Disordered" evidence="2">
    <location>
        <begin position="201"/>
        <end position="229"/>
    </location>
</feature>
<gene>
    <name evidence="1" type="primary">rpl2</name>
    <name type="ordered locus">Cmaq_1278</name>
</gene>
<organism>
    <name type="scientific">Caldivirga maquilingensis (strain ATCC 700844 / DSM 13496 / JCM 10307 / IC-167)</name>
    <dbReference type="NCBI Taxonomy" id="397948"/>
    <lineage>
        <taxon>Archaea</taxon>
        <taxon>Thermoproteota</taxon>
        <taxon>Thermoprotei</taxon>
        <taxon>Thermoproteales</taxon>
        <taxon>Thermoproteaceae</taxon>
        <taxon>Caldivirga</taxon>
    </lineage>
</organism>
<protein>
    <recommendedName>
        <fullName evidence="1">Large ribosomal subunit protein uL2</fullName>
    </recommendedName>
    <alternativeName>
        <fullName evidence="3">50S ribosomal protein L2</fullName>
    </alternativeName>
</protein>
<name>RL2_CALMQ</name>
<proteinExistence type="inferred from homology"/>
<dbReference type="EMBL" id="CP000852">
    <property type="protein sequence ID" value="ABW02105.1"/>
    <property type="molecule type" value="Genomic_DNA"/>
</dbReference>
<dbReference type="RefSeq" id="WP_012186324.1">
    <property type="nucleotide sequence ID" value="NC_009954.1"/>
</dbReference>
<dbReference type="SMR" id="A8ME99"/>
<dbReference type="STRING" id="397948.Cmaq_1278"/>
<dbReference type="GeneID" id="5708678"/>
<dbReference type="KEGG" id="cma:Cmaq_1278"/>
<dbReference type="eggNOG" id="arCOG04067">
    <property type="taxonomic scope" value="Archaea"/>
</dbReference>
<dbReference type="HOGENOM" id="CLU_036235_0_1_2"/>
<dbReference type="OrthoDB" id="5987at2157"/>
<dbReference type="Proteomes" id="UP000001137">
    <property type="component" value="Chromosome"/>
</dbReference>
<dbReference type="GO" id="GO:0022625">
    <property type="term" value="C:cytosolic large ribosomal subunit"/>
    <property type="evidence" value="ECO:0007669"/>
    <property type="project" value="TreeGrafter"/>
</dbReference>
<dbReference type="GO" id="GO:0019843">
    <property type="term" value="F:rRNA binding"/>
    <property type="evidence" value="ECO:0007669"/>
    <property type="project" value="UniProtKB-UniRule"/>
</dbReference>
<dbReference type="GO" id="GO:0003735">
    <property type="term" value="F:structural constituent of ribosome"/>
    <property type="evidence" value="ECO:0007669"/>
    <property type="project" value="InterPro"/>
</dbReference>
<dbReference type="GO" id="GO:0002181">
    <property type="term" value="P:cytoplasmic translation"/>
    <property type="evidence" value="ECO:0007669"/>
    <property type="project" value="TreeGrafter"/>
</dbReference>
<dbReference type="Gene3D" id="2.30.30.30">
    <property type="match status" value="1"/>
</dbReference>
<dbReference type="Gene3D" id="2.40.50.140">
    <property type="entry name" value="Nucleic acid-binding proteins"/>
    <property type="match status" value="1"/>
</dbReference>
<dbReference type="Gene3D" id="4.10.950.10">
    <property type="entry name" value="Ribosomal protein L2, domain 3"/>
    <property type="match status" value="1"/>
</dbReference>
<dbReference type="HAMAP" id="MF_01320_A">
    <property type="entry name" value="Ribosomal_uL2_A"/>
    <property type="match status" value="1"/>
</dbReference>
<dbReference type="InterPro" id="IPR012340">
    <property type="entry name" value="NA-bd_OB-fold"/>
</dbReference>
<dbReference type="InterPro" id="IPR014722">
    <property type="entry name" value="Rib_uL2_dom2"/>
</dbReference>
<dbReference type="InterPro" id="IPR002171">
    <property type="entry name" value="Ribosomal_uL2"/>
</dbReference>
<dbReference type="InterPro" id="IPR023672">
    <property type="entry name" value="Ribosomal_uL2_arc_euk"/>
</dbReference>
<dbReference type="InterPro" id="IPR022669">
    <property type="entry name" value="Ribosomal_uL2_C"/>
</dbReference>
<dbReference type="InterPro" id="IPR014726">
    <property type="entry name" value="Ribosomal_uL2_dom3"/>
</dbReference>
<dbReference type="InterPro" id="IPR022666">
    <property type="entry name" value="Ribosomal_uL2_RNA-bd_dom"/>
</dbReference>
<dbReference type="InterPro" id="IPR008991">
    <property type="entry name" value="Translation_prot_SH3-like_sf"/>
</dbReference>
<dbReference type="NCBIfam" id="NF007180">
    <property type="entry name" value="PRK09612.1"/>
    <property type="match status" value="1"/>
</dbReference>
<dbReference type="PANTHER" id="PTHR13691:SF16">
    <property type="entry name" value="LARGE RIBOSOMAL SUBUNIT PROTEIN UL2"/>
    <property type="match status" value="1"/>
</dbReference>
<dbReference type="PANTHER" id="PTHR13691">
    <property type="entry name" value="RIBOSOMAL PROTEIN L2"/>
    <property type="match status" value="1"/>
</dbReference>
<dbReference type="Pfam" id="PF00181">
    <property type="entry name" value="Ribosomal_L2"/>
    <property type="match status" value="1"/>
</dbReference>
<dbReference type="Pfam" id="PF03947">
    <property type="entry name" value="Ribosomal_L2_C"/>
    <property type="match status" value="1"/>
</dbReference>
<dbReference type="PIRSF" id="PIRSF002158">
    <property type="entry name" value="Ribosomal_L2"/>
    <property type="match status" value="1"/>
</dbReference>
<dbReference type="SMART" id="SM01383">
    <property type="entry name" value="Ribosomal_L2"/>
    <property type="match status" value="1"/>
</dbReference>
<dbReference type="SMART" id="SM01382">
    <property type="entry name" value="Ribosomal_L2_C"/>
    <property type="match status" value="1"/>
</dbReference>
<dbReference type="SUPFAM" id="SSF50249">
    <property type="entry name" value="Nucleic acid-binding proteins"/>
    <property type="match status" value="1"/>
</dbReference>
<dbReference type="SUPFAM" id="SSF50104">
    <property type="entry name" value="Translation proteins SH3-like domain"/>
    <property type="match status" value="1"/>
</dbReference>
<comment type="function">
    <text evidence="1">One of the primary rRNA binding proteins. Required for association of the 30S and 50S subunits to form the 70S ribosome, for tRNA binding and peptide bond formation. It has been suggested to have peptidyltransferase activity; this is somewhat controversial. Makes several contacts with the 16S rRNA in the 70S ribosome.</text>
</comment>
<comment type="subunit">
    <text evidence="1">Part of the 50S ribosomal subunit. Forms a bridge to the 30S subunit in the 70S ribosome.</text>
</comment>
<comment type="similarity">
    <text evidence="1">Belongs to the universal ribosomal protein uL2 family.</text>
</comment>
<accession>A8ME99</accession>
<sequence>MGKKILVQRAGRGGSQFRSPSWRRIAPLRYVQFSEEQLKTTIRGIIKELVHVTGLNAPAMHVVLENGEEMYLPAVEGVYVGKIIEFGPDAKVEPGNVMPIGKIPEGTMVCNIEKRVGDGGKYARSSGTYGVVMIHRDSTTLVQLPSGRMIEVDSRARATIGIVAGGGRIEKPFVKAGNKYHRARTKAWKYPKVRGKAMSAYAHPHGGGSHQQGGTPVKKNAPPGQKVGFYGSKCTGRGCVRWRAQQAKTQQRQQA</sequence>
<reference key="1">
    <citation type="submission" date="2007-10" db="EMBL/GenBank/DDBJ databases">
        <title>Complete sequence of Caldivirga maquilingensis IC-167.</title>
        <authorList>
            <consortium name="US DOE Joint Genome Institute"/>
            <person name="Copeland A."/>
            <person name="Lucas S."/>
            <person name="Lapidus A."/>
            <person name="Barry K."/>
            <person name="Glavina del Rio T."/>
            <person name="Dalin E."/>
            <person name="Tice H."/>
            <person name="Pitluck S."/>
            <person name="Saunders E."/>
            <person name="Brettin T."/>
            <person name="Bruce D."/>
            <person name="Detter J.C."/>
            <person name="Han C."/>
            <person name="Schmutz J."/>
            <person name="Larimer F."/>
            <person name="Land M."/>
            <person name="Hauser L."/>
            <person name="Kyrpides N."/>
            <person name="Ivanova N."/>
            <person name="Biddle J.F."/>
            <person name="Zhang Z."/>
            <person name="Fitz-Gibbon S.T."/>
            <person name="Lowe T.M."/>
            <person name="Saltikov C."/>
            <person name="House C.H."/>
            <person name="Richardson P."/>
        </authorList>
    </citation>
    <scope>NUCLEOTIDE SEQUENCE [LARGE SCALE GENOMIC DNA]</scope>
    <source>
        <strain>ATCC 700844 / DSM 13496 / JCM 10307 / IC-167</strain>
    </source>
</reference>